<gene>
    <name evidence="1" type="primary">hisB</name>
    <name type="ordered locus">SE_0273</name>
</gene>
<protein>
    <recommendedName>
        <fullName evidence="1">Imidazoleglycerol-phosphate dehydratase</fullName>
        <shortName evidence="1">IGPD</shortName>
        <ecNumber evidence="1">4.2.1.19</ecNumber>
    </recommendedName>
</protein>
<comment type="catalytic activity">
    <reaction evidence="1">
        <text>D-erythro-1-(imidazol-4-yl)glycerol 3-phosphate = 3-(imidazol-4-yl)-2-oxopropyl phosphate + H2O</text>
        <dbReference type="Rhea" id="RHEA:11040"/>
        <dbReference type="ChEBI" id="CHEBI:15377"/>
        <dbReference type="ChEBI" id="CHEBI:57766"/>
        <dbReference type="ChEBI" id="CHEBI:58278"/>
        <dbReference type="EC" id="4.2.1.19"/>
    </reaction>
</comment>
<comment type="pathway">
    <text evidence="1">Amino-acid biosynthesis; L-histidine biosynthesis; L-histidine from 5-phospho-alpha-D-ribose 1-diphosphate: step 6/9.</text>
</comment>
<comment type="subcellular location">
    <subcellularLocation>
        <location evidence="1">Cytoplasm</location>
    </subcellularLocation>
</comment>
<comment type="similarity">
    <text evidence="1">Belongs to the imidazoleglycerol-phosphate dehydratase family.</text>
</comment>
<keyword id="KW-0028">Amino-acid biosynthesis</keyword>
<keyword id="KW-0963">Cytoplasm</keyword>
<keyword id="KW-0368">Histidine biosynthesis</keyword>
<keyword id="KW-0456">Lyase</keyword>
<evidence type="ECO:0000255" key="1">
    <source>
        <dbReference type="HAMAP-Rule" id="MF_00076"/>
    </source>
</evidence>
<feature type="chain" id="PRO_0000158171" description="Imidazoleglycerol-phosphate dehydratase">
    <location>
        <begin position="1"/>
        <end position="192"/>
    </location>
</feature>
<proteinExistence type="inferred from homology"/>
<reference key="1">
    <citation type="journal article" date="2003" name="Mol. Microbiol.">
        <title>Genome-based analysis of virulence genes in a non-biofilm-forming Staphylococcus epidermidis strain (ATCC 12228).</title>
        <authorList>
            <person name="Zhang Y.-Q."/>
            <person name="Ren S.-X."/>
            <person name="Li H.-L."/>
            <person name="Wang Y.-X."/>
            <person name="Fu G."/>
            <person name="Yang J."/>
            <person name="Qin Z.-Q."/>
            <person name="Miao Y.-G."/>
            <person name="Wang W.-Y."/>
            <person name="Chen R.-S."/>
            <person name="Shen Y."/>
            <person name="Chen Z."/>
            <person name="Yuan Z.-H."/>
            <person name="Zhao G.-P."/>
            <person name="Qu D."/>
            <person name="Danchin A."/>
            <person name="Wen Y.-M."/>
        </authorList>
    </citation>
    <scope>NUCLEOTIDE SEQUENCE [LARGE SCALE GENOMIC DNA]</scope>
    <source>
        <strain>ATCC 12228 / FDA PCI 1200</strain>
    </source>
</reference>
<sequence>MNYQIKRNTEETQLNISLANNGTQSHINTGVGFLDHMLTLFTFHSGLTLSIEATGDTYVDDHHITEDIGIVIGQLLLELVKTQQSFTRYGCSYVPMDETLARTVVDISGRPYFSFNSKLSAQKVGTFDTELVEEFFRALVINARLTVHIDLLRGGNTHHEIEAIFKSFARALKISLAQNEDGRIPSSKGVIE</sequence>
<organism>
    <name type="scientific">Staphylococcus epidermidis (strain ATCC 12228 / FDA PCI 1200)</name>
    <dbReference type="NCBI Taxonomy" id="176280"/>
    <lineage>
        <taxon>Bacteria</taxon>
        <taxon>Bacillati</taxon>
        <taxon>Bacillota</taxon>
        <taxon>Bacilli</taxon>
        <taxon>Bacillales</taxon>
        <taxon>Staphylococcaceae</taxon>
        <taxon>Staphylococcus</taxon>
    </lineage>
</organism>
<dbReference type="EC" id="4.2.1.19" evidence="1"/>
<dbReference type="EMBL" id="AE015929">
    <property type="protein sequence ID" value="AAO03870.1"/>
    <property type="molecule type" value="Genomic_DNA"/>
</dbReference>
<dbReference type="RefSeq" id="NP_763828.1">
    <property type="nucleotide sequence ID" value="NC_004461.1"/>
</dbReference>
<dbReference type="RefSeq" id="WP_002437839.1">
    <property type="nucleotide sequence ID" value="NZ_WBME01000037.1"/>
</dbReference>
<dbReference type="SMR" id="Q8CQ94"/>
<dbReference type="GeneID" id="50017667"/>
<dbReference type="KEGG" id="sep:SE_0273"/>
<dbReference type="PATRIC" id="fig|176280.10.peg.251"/>
<dbReference type="eggNOG" id="COG0131">
    <property type="taxonomic scope" value="Bacteria"/>
</dbReference>
<dbReference type="HOGENOM" id="CLU_044308_3_0_9"/>
<dbReference type="OrthoDB" id="9790411at2"/>
<dbReference type="UniPathway" id="UPA00031">
    <property type="reaction ID" value="UER00011"/>
</dbReference>
<dbReference type="Proteomes" id="UP000001411">
    <property type="component" value="Chromosome"/>
</dbReference>
<dbReference type="GO" id="GO:0005737">
    <property type="term" value="C:cytoplasm"/>
    <property type="evidence" value="ECO:0007669"/>
    <property type="project" value="UniProtKB-SubCell"/>
</dbReference>
<dbReference type="GO" id="GO:0004424">
    <property type="term" value="F:imidazoleglycerol-phosphate dehydratase activity"/>
    <property type="evidence" value="ECO:0007669"/>
    <property type="project" value="UniProtKB-UniRule"/>
</dbReference>
<dbReference type="GO" id="GO:0000105">
    <property type="term" value="P:L-histidine biosynthetic process"/>
    <property type="evidence" value="ECO:0007669"/>
    <property type="project" value="UniProtKB-UniRule"/>
</dbReference>
<dbReference type="CDD" id="cd07914">
    <property type="entry name" value="IGPD"/>
    <property type="match status" value="1"/>
</dbReference>
<dbReference type="FunFam" id="3.30.230.40:FF:000001">
    <property type="entry name" value="Imidazoleglycerol-phosphate dehydratase HisB"/>
    <property type="match status" value="1"/>
</dbReference>
<dbReference type="FunFam" id="3.30.230.40:FF:000003">
    <property type="entry name" value="Imidazoleglycerol-phosphate dehydratase HisB"/>
    <property type="match status" value="1"/>
</dbReference>
<dbReference type="Gene3D" id="3.30.230.40">
    <property type="entry name" value="Imidazole glycerol phosphate dehydratase, domain 1"/>
    <property type="match status" value="2"/>
</dbReference>
<dbReference type="HAMAP" id="MF_00076">
    <property type="entry name" value="HisB"/>
    <property type="match status" value="1"/>
</dbReference>
<dbReference type="InterPro" id="IPR038494">
    <property type="entry name" value="IGPD_sf"/>
</dbReference>
<dbReference type="InterPro" id="IPR000807">
    <property type="entry name" value="ImidazoleglycerolP_deHydtase"/>
</dbReference>
<dbReference type="InterPro" id="IPR020565">
    <property type="entry name" value="ImidazoleglycerP_deHydtase_CS"/>
</dbReference>
<dbReference type="InterPro" id="IPR020568">
    <property type="entry name" value="Ribosomal_Su5_D2-typ_SF"/>
</dbReference>
<dbReference type="NCBIfam" id="NF002107">
    <property type="entry name" value="PRK00951.1-2"/>
    <property type="match status" value="1"/>
</dbReference>
<dbReference type="NCBIfam" id="NF002111">
    <property type="entry name" value="PRK00951.2-1"/>
    <property type="match status" value="1"/>
</dbReference>
<dbReference type="NCBIfam" id="NF002114">
    <property type="entry name" value="PRK00951.2-4"/>
    <property type="match status" value="1"/>
</dbReference>
<dbReference type="PANTHER" id="PTHR23133:SF2">
    <property type="entry name" value="IMIDAZOLEGLYCEROL-PHOSPHATE DEHYDRATASE"/>
    <property type="match status" value="1"/>
</dbReference>
<dbReference type="PANTHER" id="PTHR23133">
    <property type="entry name" value="IMIDAZOLEGLYCEROL-PHOSPHATE DEHYDRATASE HIS7"/>
    <property type="match status" value="1"/>
</dbReference>
<dbReference type="Pfam" id="PF00475">
    <property type="entry name" value="IGPD"/>
    <property type="match status" value="1"/>
</dbReference>
<dbReference type="SUPFAM" id="SSF54211">
    <property type="entry name" value="Ribosomal protein S5 domain 2-like"/>
    <property type="match status" value="2"/>
</dbReference>
<dbReference type="PROSITE" id="PS00954">
    <property type="entry name" value="IGP_DEHYDRATASE_1"/>
    <property type="match status" value="1"/>
</dbReference>
<dbReference type="PROSITE" id="PS00955">
    <property type="entry name" value="IGP_DEHYDRATASE_2"/>
    <property type="match status" value="1"/>
</dbReference>
<name>HIS7_STAES</name>
<accession>Q8CQ94</accession>